<name>HFQ_SHISS</name>
<organism>
    <name type="scientific">Shigella sonnei (strain Ss046)</name>
    <dbReference type="NCBI Taxonomy" id="300269"/>
    <lineage>
        <taxon>Bacteria</taxon>
        <taxon>Pseudomonadati</taxon>
        <taxon>Pseudomonadota</taxon>
        <taxon>Gammaproteobacteria</taxon>
        <taxon>Enterobacterales</taxon>
        <taxon>Enterobacteriaceae</taxon>
        <taxon>Shigella</taxon>
    </lineage>
</organism>
<proteinExistence type="inferred from homology"/>
<comment type="function">
    <text evidence="1">RNA chaperone that binds small regulatory RNA (sRNAs) and mRNAs to facilitate mRNA translational regulation in response to envelope stress, environmental stress and changes in metabolite concentrations. Also binds with high specificity to tRNAs.</text>
</comment>
<comment type="subunit">
    <text evidence="1">Homohexamer.</text>
</comment>
<comment type="similarity">
    <text evidence="1">Belongs to the Hfq family.</text>
</comment>
<reference key="1">
    <citation type="journal article" date="2005" name="Nucleic Acids Res.">
        <title>Genome dynamics and diversity of Shigella species, the etiologic agents of bacillary dysentery.</title>
        <authorList>
            <person name="Yang F."/>
            <person name="Yang J."/>
            <person name="Zhang X."/>
            <person name="Chen L."/>
            <person name="Jiang Y."/>
            <person name="Yan Y."/>
            <person name="Tang X."/>
            <person name="Wang J."/>
            <person name="Xiong Z."/>
            <person name="Dong J."/>
            <person name="Xue Y."/>
            <person name="Zhu Y."/>
            <person name="Xu X."/>
            <person name="Sun L."/>
            <person name="Chen S."/>
            <person name="Nie H."/>
            <person name="Peng J."/>
            <person name="Xu J."/>
            <person name="Wang Y."/>
            <person name="Yuan Z."/>
            <person name="Wen Y."/>
            <person name="Yao Z."/>
            <person name="Shen Y."/>
            <person name="Qiang B."/>
            <person name="Hou Y."/>
            <person name="Yu J."/>
            <person name="Jin Q."/>
        </authorList>
    </citation>
    <scope>NUCLEOTIDE SEQUENCE [LARGE SCALE GENOMIC DNA]</scope>
    <source>
        <strain>Ss046</strain>
    </source>
</reference>
<protein>
    <recommendedName>
        <fullName evidence="1">RNA-binding protein Hfq</fullName>
    </recommendedName>
</protein>
<evidence type="ECO:0000255" key="1">
    <source>
        <dbReference type="HAMAP-Rule" id="MF_00436"/>
    </source>
</evidence>
<evidence type="ECO:0000255" key="2">
    <source>
        <dbReference type="PROSITE-ProRule" id="PRU01346"/>
    </source>
</evidence>
<evidence type="ECO:0000256" key="3">
    <source>
        <dbReference type="SAM" id="MobiDB-lite"/>
    </source>
</evidence>
<gene>
    <name evidence="1" type="primary">hfq</name>
    <name type="ordered locus">SSON_4357</name>
</gene>
<keyword id="KW-1185">Reference proteome</keyword>
<keyword id="KW-0694">RNA-binding</keyword>
<keyword id="KW-0346">Stress response</keyword>
<feature type="chain" id="PRO_0000265193" description="RNA-binding protein Hfq">
    <location>
        <begin position="1"/>
        <end position="102"/>
    </location>
</feature>
<feature type="domain" description="Sm" evidence="2">
    <location>
        <begin position="9"/>
        <end position="68"/>
    </location>
</feature>
<feature type="region of interest" description="Disordered" evidence="3">
    <location>
        <begin position="63"/>
        <end position="102"/>
    </location>
</feature>
<feature type="compositionally biased region" description="Polar residues" evidence="3">
    <location>
        <begin position="70"/>
        <end position="96"/>
    </location>
</feature>
<accession>Q3YUH1</accession>
<sequence>MAKGQSLQDPFLNALRRERVPVSIYLVNGIKLQGQIESFDQFVILLKNTVSQMVYKHAISTVVPSRPVSHHSNNAGGGTSSNYHHGSSAQNTSAQQDSEETE</sequence>
<dbReference type="EMBL" id="CP000038">
    <property type="protein sequence ID" value="AAZ90841.1"/>
    <property type="molecule type" value="Genomic_DNA"/>
</dbReference>
<dbReference type="RefSeq" id="WP_001051883.1">
    <property type="nucleotide sequence ID" value="NC_007384.1"/>
</dbReference>
<dbReference type="SMR" id="Q3YUH1"/>
<dbReference type="GeneID" id="93777649"/>
<dbReference type="KEGG" id="ssn:SSON_4357"/>
<dbReference type="HOGENOM" id="CLU_113688_2_1_6"/>
<dbReference type="Proteomes" id="UP000002529">
    <property type="component" value="Chromosome"/>
</dbReference>
<dbReference type="GO" id="GO:0005829">
    <property type="term" value="C:cytosol"/>
    <property type="evidence" value="ECO:0007669"/>
    <property type="project" value="TreeGrafter"/>
</dbReference>
<dbReference type="GO" id="GO:0003723">
    <property type="term" value="F:RNA binding"/>
    <property type="evidence" value="ECO:0007669"/>
    <property type="project" value="UniProtKB-UniRule"/>
</dbReference>
<dbReference type="GO" id="GO:0006355">
    <property type="term" value="P:regulation of DNA-templated transcription"/>
    <property type="evidence" value="ECO:0007669"/>
    <property type="project" value="InterPro"/>
</dbReference>
<dbReference type="GO" id="GO:0043487">
    <property type="term" value="P:regulation of RNA stability"/>
    <property type="evidence" value="ECO:0007669"/>
    <property type="project" value="TreeGrafter"/>
</dbReference>
<dbReference type="GO" id="GO:0045974">
    <property type="term" value="P:regulation of translation, ncRNA-mediated"/>
    <property type="evidence" value="ECO:0007669"/>
    <property type="project" value="TreeGrafter"/>
</dbReference>
<dbReference type="CDD" id="cd01716">
    <property type="entry name" value="Hfq"/>
    <property type="match status" value="1"/>
</dbReference>
<dbReference type="FunFam" id="2.30.30.100:FF:000001">
    <property type="entry name" value="RNA-binding protein Hfq"/>
    <property type="match status" value="1"/>
</dbReference>
<dbReference type="Gene3D" id="2.30.30.100">
    <property type="match status" value="1"/>
</dbReference>
<dbReference type="HAMAP" id="MF_00436">
    <property type="entry name" value="Hfq"/>
    <property type="match status" value="1"/>
</dbReference>
<dbReference type="InterPro" id="IPR005001">
    <property type="entry name" value="Hfq"/>
</dbReference>
<dbReference type="InterPro" id="IPR010920">
    <property type="entry name" value="LSM_dom_sf"/>
</dbReference>
<dbReference type="InterPro" id="IPR047575">
    <property type="entry name" value="Sm"/>
</dbReference>
<dbReference type="NCBIfam" id="TIGR02383">
    <property type="entry name" value="Hfq"/>
    <property type="match status" value="1"/>
</dbReference>
<dbReference type="NCBIfam" id="NF001602">
    <property type="entry name" value="PRK00395.1"/>
    <property type="match status" value="1"/>
</dbReference>
<dbReference type="PANTHER" id="PTHR34772">
    <property type="entry name" value="RNA-BINDING PROTEIN HFQ"/>
    <property type="match status" value="1"/>
</dbReference>
<dbReference type="PANTHER" id="PTHR34772:SF1">
    <property type="entry name" value="RNA-BINDING PROTEIN HFQ"/>
    <property type="match status" value="1"/>
</dbReference>
<dbReference type="Pfam" id="PF17209">
    <property type="entry name" value="Hfq"/>
    <property type="match status" value="1"/>
</dbReference>
<dbReference type="SUPFAM" id="SSF50182">
    <property type="entry name" value="Sm-like ribonucleoproteins"/>
    <property type="match status" value="1"/>
</dbReference>
<dbReference type="PROSITE" id="PS52002">
    <property type="entry name" value="SM"/>
    <property type="match status" value="1"/>
</dbReference>